<protein>
    <recommendedName>
        <fullName evidence="2">GTP cyclohydrolase 1</fullName>
        <ecNumber evidence="2">3.5.4.16</ecNumber>
    </recommendedName>
    <alternativeName>
        <fullName evidence="2">GTP cyclohydrolase I</fullName>
        <shortName evidence="2">GTP-CH-I</shortName>
    </alternativeName>
</protein>
<accession>A4WCI8</accession>
<gene>
    <name evidence="2" type="primary">folE</name>
    <name type="ordered locus">Ent638_2753</name>
</gene>
<dbReference type="EC" id="3.5.4.16" evidence="2"/>
<dbReference type="EMBL" id="CP000653">
    <property type="protein sequence ID" value="ABP61418.1"/>
    <property type="molecule type" value="Genomic_DNA"/>
</dbReference>
<dbReference type="RefSeq" id="WP_015959751.1">
    <property type="nucleotide sequence ID" value="NC_009436.1"/>
</dbReference>
<dbReference type="SMR" id="A4WCI8"/>
<dbReference type="STRING" id="399742.Ent638_2753"/>
<dbReference type="KEGG" id="ent:Ent638_2753"/>
<dbReference type="eggNOG" id="COG0302">
    <property type="taxonomic scope" value="Bacteria"/>
</dbReference>
<dbReference type="HOGENOM" id="CLU_049768_3_2_6"/>
<dbReference type="OrthoDB" id="9801207at2"/>
<dbReference type="UniPathway" id="UPA00848">
    <property type="reaction ID" value="UER00151"/>
</dbReference>
<dbReference type="Proteomes" id="UP000000230">
    <property type="component" value="Chromosome"/>
</dbReference>
<dbReference type="GO" id="GO:0005737">
    <property type="term" value="C:cytoplasm"/>
    <property type="evidence" value="ECO:0007669"/>
    <property type="project" value="TreeGrafter"/>
</dbReference>
<dbReference type="GO" id="GO:0005525">
    <property type="term" value="F:GTP binding"/>
    <property type="evidence" value="ECO:0007669"/>
    <property type="project" value="UniProtKB-KW"/>
</dbReference>
<dbReference type="GO" id="GO:0003934">
    <property type="term" value="F:GTP cyclohydrolase I activity"/>
    <property type="evidence" value="ECO:0007669"/>
    <property type="project" value="UniProtKB-UniRule"/>
</dbReference>
<dbReference type="GO" id="GO:0008270">
    <property type="term" value="F:zinc ion binding"/>
    <property type="evidence" value="ECO:0007669"/>
    <property type="project" value="UniProtKB-UniRule"/>
</dbReference>
<dbReference type="GO" id="GO:0006730">
    <property type="term" value="P:one-carbon metabolic process"/>
    <property type="evidence" value="ECO:0007669"/>
    <property type="project" value="UniProtKB-UniRule"/>
</dbReference>
<dbReference type="GO" id="GO:0006729">
    <property type="term" value="P:tetrahydrobiopterin biosynthetic process"/>
    <property type="evidence" value="ECO:0007669"/>
    <property type="project" value="TreeGrafter"/>
</dbReference>
<dbReference type="GO" id="GO:0046654">
    <property type="term" value="P:tetrahydrofolate biosynthetic process"/>
    <property type="evidence" value="ECO:0007669"/>
    <property type="project" value="UniProtKB-UniRule"/>
</dbReference>
<dbReference type="FunFam" id="1.10.286.10:FF:000002">
    <property type="entry name" value="GTP cyclohydrolase 1"/>
    <property type="match status" value="1"/>
</dbReference>
<dbReference type="FunFam" id="3.30.1130.10:FF:000001">
    <property type="entry name" value="GTP cyclohydrolase 1"/>
    <property type="match status" value="1"/>
</dbReference>
<dbReference type="Gene3D" id="1.10.286.10">
    <property type="match status" value="1"/>
</dbReference>
<dbReference type="Gene3D" id="3.30.1130.10">
    <property type="match status" value="1"/>
</dbReference>
<dbReference type="HAMAP" id="MF_00223">
    <property type="entry name" value="FolE"/>
    <property type="match status" value="1"/>
</dbReference>
<dbReference type="InterPro" id="IPR043133">
    <property type="entry name" value="GTP-CH-I_C/QueF"/>
</dbReference>
<dbReference type="InterPro" id="IPR043134">
    <property type="entry name" value="GTP-CH-I_N"/>
</dbReference>
<dbReference type="InterPro" id="IPR001474">
    <property type="entry name" value="GTP_CycHdrlase_I"/>
</dbReference>
<dbReference type="InterPro" id="IPR018234">
    <property type="entry name" value="GTP_CycHdrlase_I_CS"/>
</dbReference>
<dbReference type="InterPro" id="IPR020602">
    <property type="entry name" value="GTP_CycHdrlase_I_dom"/>
</dbReference>
<dbReference type="NCBIfam" id="TIGR00063">
    <property type="entry name" value="folE"/>
    <property type="match status" value="1"/>
</dbReference>
<dbReference type="NCBIfam" id="NF006824">
    <property type="entry name" value="PRK09347.1-1"/>
    <property type="match status" value="1"/>
</dbReference>
<dbReference type="NCBIfam" id="NF006825">
    <property type="entry name" value="PRK09347.1-2"/>
    <property type="match status" value="1"/>
</dbReference>
<dbReference type="NCBIfam" id="NF006826">
    <property type="entry name" value="PRK09347.1-3"/>
    <property type="match status" value="1"/>
</dbReference>
<dbReference type="PANTHER" id="PTHR11109:SF7">
    <property type="entry name" value="GTP CYCLOHYDROLASE 1"/>
    <property type="match status" value="1"/>
</dbReference>
<dbReference type="PANTHER" id="PTHR11109">
    <property type="entry name" value="GTP CYCLOHYDROLASE I"/>
    <property type="match status" value="1"/>
</dbReference>
<dbReference type="Pfam" id="PF01227">
    <property type="entry name" value="GTP_cyclohydroI"/>
    <property type="match status" value="1"/>
</dbReference>
<dbReference type="SUPFAM" id="SSF55620">
    <property type="entry name" value="Tetrahydrobiopterin biosynthesis enzymes-like"/>
    <property type="match status" value="1"/>
</dbReference>
<dbReference type="PROSITE" id="PS00859">
    <property type="entry name" value="GTP_CYCLOHYDROL_1_1"/>
    <property type="match status" value="1"/>
</dbReference>
<dbReference type="PROSITE" id="PS00860">
    <property type="entry name" value="GTP_CYCLOHYDROL_1_2"/>
    <property type="match status" value="1"/>
</dbReference>
<keyword id="KW-0342">GTP-binding</keyword>
<keyword id="KW-0378">Hydrolase</keyword>
<keyword id="KW-0479">Metal-binding</keyword>
<keyword id="KW-0547">Nucleotide-binding</keyword>
<keyword id="KW-0554">One-carbon metabolism</keyword>
<keyword id="KW-0862">Zinc</keyword>
<name>GCH1_ENT38</name>
<reference key="1">
    <citation type="journal article" date="2010" name="PLoS Genet.">
        <title>Genome sequence of the plant growth promoting endophytic bacterium Enterobacter sp. 638.</title>
        <authorList>
            <person name="Taghavi S."/>
            <person name="van der Lelie D."/>
            <person name="Hoffman A."/>
            <person name="Zhang Y.B."/>
            <person name="Walla M.D."/>
            <person name="Vangronsveld J."/>
            <person name="Newman L."/>
            <person name="Monchy S."/>
        </authorList>
    </citation>
    <scope>NUCLEOTIDE SEQUENCE [LARGE SCALE GENOMIC DNA]</scope>
    <source>
        <strain>638</strain>
    </source>
</reference>
<organism>
    <name type="scientific">Enterobacter sp. (strain 638)</name>
    <dbReference type="NCBI Taxonomy" id="399742"/>
    <lineage>
        <taxon>Bacteria</taxon>
        <taxon>Pseudomonadati</taxon>
        <taxon>Pseudomonadota</taxon>
        <taxon>Gammaproteobacteria</taxon>
        <taxon>Enterobacterales</taxon>
        <taxon>Enterobacteriaceae</taxon>
        <taxon>Enterobacter</taxon>
    </lineage>
</organism>
<feature type="chain" id="PRO_1000058673" description="GTP cyclohydrolase 1">
    <location>
        <begin position="1"/>
        <end position="222"/>
    </location>
</feature>
<feature type="binding site" evidence="2">
    <location>
        <position position="111"/>
    </location>
    <ligand>
        <name>Zn(2+)</name>
        <dbReference type="ChEBI" id="CHEBI:29105"/>
    </ligand>
</feature>
<feature type="binding site" evidence="2">
    <location>
        <position position="114"/>
    </location>
    <ligand>
        <name>Zn(2+)</name>
        <dbReference type="ChEBI" id="CHEBI:29105"/>
    </ligand>
</feature>
<feature type="binding site" evidence="2">
    <location>
        <position position="182"/>
    </location>
    <ligand>
        <name>Zn(2+)</name>
        <dbReference type="ChEBI" id="CHEBI:29105"/>
    </ligand>
</feature>
<sequence length="222" mass="24816">MPSLSKEAALVHEALVARGLETPLRPPVNELDNETRKRLIAGHMTEIMQLLNLDLSDDSLMETPQRIAKMYVDEIFSGLDYANFPKITVIENKMNVDEMVTVRDITLTSTCEHHFVTIDGKATVAYIPKDTVIGLSKINRIVQFFAQRPQVQERLTQQILTALQTLLGTNNVAVSIDAVHYCVKARGVRDATSATTTTSLGGLFKSSQNTRQEFLRAVRHHN</sequence>
<evidence type="ECO:0000250" key="1"/>
<evidence type="ECO:0000255" key="2">
    <source>
        <dbReference type="HAMAP-Rule" id="MF_00223"/>
    </source>
</evidence>
<comment type="catalytic activity">
    <reaction evidence="2">
        <text>GTP + H2O = 7,8-dihydroneopterin 3'-triphosphate + formate + H(+)</text>
        <dbReference type="Rhea" id="RHEA:17473"/>
        <dbReference type="ChEBI" id="CHEBI:15377"/>
        <dbReference type="ChEBI" id="CHEBI:15378"/>
        <dbReference type="ChEBI" id="CHEBI:15740"/>
        <dbReference type="ChEBI" id="CHEBI:37565"/>
        <dbReference type="ChEBI" id="CHEBI:58462"/>
        <dbReference type="EC" id="3.5.4.16"/>
    </reaction>
</comment>
<comment type="pathway">
    <text evidence="2">Cofactor biosynthesis; 7,8-dihydroneopterin triphosphate biosynthesis; 7,8-dihydroneopterin triphosphate from GTP: step 1/1.</text>
</comment>
<comment type="subunit">
    <text evidence="1">Toroid-shaped homodecamer, composed of two pentamers of five dimers.</text>
</comment>
<comment type="similarity">
    <text evidence="2">Belongs to the GTP cyclohydrolase I family.</text>
</comment>
<proteinExistence type="inferred from homology"/>